<keyword id="KW-0067">ATP-binding</keyword>
<keyword id="KW-0963">Cytoplasm</keyword>
<keyword id="KW-0418">Kinase</keyword>
<keyword id="KW-0547">Nucleotide-binding</keyword>
<keyword id="KW-0808">Transferase</keyword>
<dbReference type="EC" id="2.7.4.8" evidence="1"/>
<dbReference type="EMBL" id="CP000026">
    <property type="protein sequence ID" value="AAV79393.1"/>
    <property type="molecule type" value="Genomic_DNA"/>
</dbReference>
<dbReference type="RefSeq" id="WP_000046966.1">
    <property type="nucleotide sequence ID" value="NC_006511.1"/>
</dbReference>
<dbReference type="SMR" id="Q5PC40"/>
<dbReference type="KEGG" id="spt:SPA3592"/>
<dbReference type="HOGENOM" id="CLU_001715_1_0_6"/>
<dbReference type="Proteomes" id="UP000008185">
    <property type="component" value="Chromosome"/>
</dbReference>
<dbReference type="GO" id="GO:0005829">
    <property type="term" value="C:cytosol"/>
    <property type="evidence" value="ECO:0007669"/>
    <property type="project" value="TreeGrafter"/>
</dbReference>
<dbReference type="GO" id="GO:0005524">
    <property type="term" value="F:ATP binding"/>
    <property type="evidence" value="ECO:0007669"/>
    <property type="project" value="UniProtKB-UniRule"/>
</dbReference>
<dbReference type="GO" id="GO:0004385">
    <property type="term" value="F:guanylate kinase activity"/>
    <property type="evidence" value="ECO:0007669"/>
    <property type="project" value="UniProtKB-UniRule"/>
</dbReference>
<dbReference type="CDD" id="cd00071">
    <property type="entry name" value="GMPK"/>
    <property type="match status" value="1"/>
</dbReference>
<dbReference type="FunFam" id="3.40.50.300:FF:000084">
    <property type="entry name" value="Guanylate kinase"/>
    <property type="match status" value="1"/>
</dbReference>
<dbReference type="FunFam" id="3.30.63.10:FF:000002">
    <property type="entry name" value="Guanylate kinase 1"/>
    <property type="match status" value="1"/>
</dbReference>
<dbReference type="Gene3D" id="3.30.63.10">
    <property type="entry name" value="Guanylate Kinase phosphate binding domain"/>
    <property type="match status" value="1"/>
</dbReference>
<dbReference type="Gene3D" id="3.40.50.300">
    <property type="entry name" value="P-loop containing nucleotide triphosphate hydrolases"/>
    <property type="match status" value="1"/>
</dbReference>
<dbReference type="HAMAP" id="MF_00328">
    <property type="entry name" value="Guanylate_kinase"/>
    <property type="match status" value="1"/>
</dbReference>
<dbReference type="InterPro" id="IPR008145">
    <property type="entry name" value="GK/Ca_channel_bsu"/>
</dbReference>
<dbReference type="InterPro" id="IPR008144">
    <property type="entry name" value="Guanylate_kin-like_dom"/>
</dbReference>
<dbReference type="InterPro" id="IPR017665">
    <property type="entry name" value="Guanylate_kinase"/>
</dbReference>
<dbReference type="InterPro" id="IPR020590">
    <property type="entry name" value="Guanylate_kinase_CS"/>
</dbReference>
<dbReference type="InterPro" id="IPR027417">
    <property type="entry name" value="P-loop_NTPase"/>
</dbReference>
<dbReference type="NCBIfam" id="TIGR03263">
    <property type="entry name" value="guanyl_kin"/>
    <property type="match status" value="1"/>
</dbReference>
<dbReference type="PANTHER" id="PTHR23117:SF13">
    <property type="entry name" value="GUANYLATE KINASE"/>
    <property type="match status" value="1"/>
</dbReference>
<dbReference type="PANTHER" id="PTHR23117">
    <property type="entry name" value="GUANYLATE KINASE-RELATED"/>
    <property type="match status" value="1"/>
</dbReference>
<dbReference type="Pfam" id="PF00625">
    <property type="entry name" value="Guanylate_kin"/>
    <property type="match status" value="1"/>
</dbReference>
<dbReference type="SMART" id="SM00072">
    <property type="entry name" value="GuKc"/>
    <property type="match status" value="1"/>
</dbReference>
<dbReference type="SUPFAM" id="SSF52540">
    <property type="entry name" value="P-loop containing nucleoside triphosphate hydrolases"/>
    <property type="match status" value="1"/>
</dbReference>
<dbReference type="PROSITE" id="PS00856">
    <property type="entry name" value="GUANYLATE_KINASE_1"/>
    <property type="match status" value="1"/>
</dbReference>
<dbReference type="PROSITE" id="PS50052">
    <property type="entry name" value="GUANYLATE_KINASE_2"/>
    <property type="match status" value="1"/>
</dbReference>
<sequence>MAQGTLYIVSAPSGAGKSSLIQALLKTQPLYDTQVSVSHTTRAPRPGEVHGEHYFFVNHDEFKTMIGREAFLEHAEVFGNYYGTSRETIEQVLATGVDVFLDIDWQGAQQIREKMPQARSIFILPPSKIELDRRLRGRGQDSEEVIAKRMAQAVAEMSHYAEYDYLIVNDDFDTALSDLKTIIRAERLRMSRQKQRHDALISKLLAD</sequence>
<name>KGUA_SALPA</name>
<organism>
    <name type="scientific">Salmonella paratyphi A (strain ATCC 9150 / SARB42)</name>
    <dbReference type="NCBI Taxonomy" id="295319"/>
    <lineage>
        <taxon>Bacteria</taxon>
        <taxon>Pseudomonadati</taxon>
        <taxon>Pseudomonadota</taxon>
        <taxon>Gammaproteobacteria</taxon>
        <taxon>Enterobacterales</taxon>
        <taxon>Enterobacteriaceae</taxon>
        <taxon>Salmonella</taxon>
    </lineage>
</organism>
<proteinExistence type="inferred from homology"/>
<reference key="1">
    <citation type="journal article" date="2004" name="Nat. Genet.">
        <title>Comparison of genome degradation in Paratyphi A and Typhi, human-restricted serovars of Salmonella enterica that cause typhoid.</title>
        <authorList>
            <person name="McClelland M."/>
            <person name="Sanderson K.E."/>
            <person name="Clifton S.W."/>
            <person name="Latreille P."/>
            <person name="Porwollik S."/>
            <person name="Sabo A."/>
            <person name="Meyer R."/>
            <person name="Bieri T."/>
            <person name="Ozersky P."/>
            <person name="McLellan M."/>
            <person name="Harkins C.R."/>
            <person name="Wang C."/>
            <person name="Nguyen C."/>
            <person name="Berghoff A."/>
            <person name="Elliott G."/>
            <person name="Kohlberg S."/>
            <person name="Strong C."/>
            <person name="Du F."/>
            <person name="Carter J."/>
            <person name="Kremizki C."/>
            <person name="Layman D."/>
            <person name="Leonard S."/>
            <person name="Sun H."/>
            <person name="Fulton L."/>
            <person name="Nash W."/>
            <person name="Miner T."/>
            <person name="Minx P."/>
            <person name="Delehaunty K."/>
            <person name="Fronick C."/>
            <person name="Magrini V."/>
            <person name="Nhan M."/>
            <person name="Warren W."/>
            <person name="Florea L."/>
            <person name="Spieth J."/>
            <person name="Wilson R.K."/>
        </authorList>
    </citation>
    <scope>NUCLEOTIDE SEQUENCE [LARGE SCALE GENOMIC DNA]</scope>
    <source>
        <strain>ATCC 9150 / SARB42</strain>
    </source>
</reference>
<feature type="chain" id="PRO_0000266395" description="Guanylate kinase">
    <location>
        <begin position="1"/>
        <end position="207"/>
    </location>
</feature>
<feature type="domain" description="Guanylate kinase-like" evidence="1">
    <location>
        <begin position="4"/>
        <end position="184"/>
    </location>
</feature>
<feature type="binding site" evidence="1">
    <location>
        <begin position="11"/>
        <end position="18"/>
    </location>
    <ligand>
        <name>ATP</name>
        <dbReference type="ChEBI" id="CHEBI:30616"/>
    </ligand>
</feature>
<protein>
    <recommendedName>
        <fullName evidence="1">Guanylate kinase</fullName>
        <ecNumber evidence="1">2.7.4.8</ecNumber>
    </recommendedName>
    <alternativeName>
        <fullName evidence="1">GMP kinase</fullName>
    </alternativeName>
</protein>
<comment type="function">
    <text evidence="1">Essential for recycling GMP and indirectly, cGMP.</text>
</comment>
<comment type="catalytic activity">
    <reaction evidence="1">
        <text>GMP + ATP = GDP + ADP</text>
        <dbReference type="Rhea" id="RHEA:20780"/>
        <dbReference type="ChEBI" id="CHEBI:30616"/>
        <dbReference type="ChEBI" id="CHEBI:58115"/>
        <dbReference type="ChEBI" id="CHEBI:58189"/>
        <dbReference type="ChEBI" id="CHEBI:456216"/>
        <dbReference type="EC" id="2.7.4.8"/>
    </reaction>
</comment>
<comment type="subcellular location">
    <subcellularLocation>
        <location evidence="1">Cytoplasm</location>
    </subcellularLocation>
</comment>
<comment type="similarity">
    <text evidence="1">Belongs to the guanylate kinase family.</text>
</comment>
<gene>
    <name evidence="1" type="primary">gmk</name>
    <name type="ordered locus">SPA3592</name>
</gene>
<accession>Q5PC40</accession>
<evidence type="ECO:0000255" key="1">
    <source>
        <dbReference type="HAMAP-Rule" id="MF_00328"/>
    </source>
</evidence>